<protein>
    <recommendedName>
        <fullName>Uncharacterized membrane protein in cps region</fullName>
    </recommendedName>
    <alternativeName>
        <fullName>ORF11</fullName>
    </alternativeName>
</protein>
<reference key="1">
    <citation type="journal article" date="1995" name="J. Bacteriol.">
        <title>Genomic organization of the Klebsiella pneumoniae cps region responsible for serotype K2 capsular polysaccharide synthesis in the virulent strain Chedid.</title>
        <authorList>
            <person name="Arakawa Y."/>
            <person name="Wacharotayankun R."/>
            <person name="Nagatsuka T."/>
            <person name="Ito H."/>
            <person name="Kato N."/>
            <person name="Ohta M."/>
        </authorList>
    </citation>
    <scope>NUCLEOTIDE SEQUENCE [GENOMIC DNA]</scope>
    <source>
        <strain>Chedid</strain>
    </source>
</reference>
<comment type="subcellular location">
    <subcellularLocation>
        <location evidence="2">Cell membrane</location>
        <topology evidence="2">Multi-pass membrane protein</topology>
    </subcellularLocation>
</comment>
<comment type="similarity">
    <text evidence="2">Belongs to the polysaccharide synthase family.</text>
</comment>
<evidence type="ECO:0000255" key="1"/>
<evidence type="ECO:0000305" key="2"/>
<proteinExistence type="inferred from homology"/>
<name>YCP11_KLEPN</name>
<sequence length="485" mass="54969">MSLKLKTIKSTKWSALSSLTIIVLGFLQMVILSRILEPFEFGVLSIMTVVFLFTDMLADCGLSNAIIQKKNITLDELSALYWVNIFLGVFLFVVTIILSYEISSWMRLDRLSFLIQLTALVFIIMPHGQQYRALMQKELEFDILSKIESFSYLTGFCLTVIIGIITKNASCAVFGYLLTVSMRTVILSFVGRKYYHPTWKRSKLREIKKQLLFSFYLTLDSILNYINSSITTPIVARVLGAIYVGGYNLSFNVAVNPPSKISPIITRVLFPALSKIQDDKERLRINFFKLLHVISYINFPALLGLCIIAKDFVYLVFGEKWLFIVPTLQLLCIAGAMRMVANPIGSLLMAKAKMELSVRFNFVKIIIFIPVLYFSTIWNGMVGAAIGFLICQAINALLSYFFLLKPVLGNCIVDYINSFFIPFVHTLPMILLLLVCDIYIDKISLTFFILKIVIGGGVYILTIFISPNKLLAEMKGLFRQLLLKS</sequence>
<keyword id="KW-1003">Cell membrane</keyword>
<keyword id="KW-0270">Exopolysaccharide synthesis</keyword>
<keyword id="KW-0472">Membrane</keyword>
<keyword id="KW-0812">Transmembrane</keyword>
<keyword id="KW-1133">Transmembrane helix</keyword>
<organism>
    <name type="scientific">Klebsiella pneumoniae</name>
    <dbReference type="NCBI Taxonomy" id="573"/>
    <lineage>
        <taxon>Bacteria</taxon>
        <taxon>Pseudomonadati</taxon>
        <taxon>Pseudomonadota</taxon>
        <taxon>Gammaproteobacteria</taxon>
        <taxon>Enterobacterales</taxon>
        <taxon>Enterobacteriaceae</taxon>
        <taxon>Klebsiella/Raoultella group</taxon>
        <taxon>Klebsiella</taxon>
        <taxon>Klebsiella pneumoniae complex</taxon>
    </lineage>
</organism>
<dbReference type="EMBL" id="D21242">
    <property type="protein sequence ID" value="BAA04782.1"/>
    <property type="molecule type" value="Genomic_DNA"/>
</dbReference>
<dbReference type="RefSeq" id="WP_023302669.1">
    <property type="nucleotide sequence ID" value="NZ_WTEH01000017.1"/>
</dbReference>
<dbReference type="SMR" id="Q48457"/>
<dbReference type="GO" id="GO:0005886">
    <property type="term" value="C:plasma membrane"/>
    <property type="evidence" value="ECO:0007669"/>
    <property type="project" value="UniProtKB-SubCell"/>
</dbReference>
<dbReference type="GO" id="GO:0000271">
    <property type="term" value="P:polysaccharide biosynthetic process"/>
    <property type="evidence" value="ECO:0007669"/>
    <property type="project" value="UniProtKB-KW"/>
</dbReference>
<dbReference type="CDD" id="cd13127">
    <property type="entry name" value="MATE_tuaB_like"/>
    <property type="match status" value="1"/>
</dbReference>
<dbReference type="InterPro" id="IPR050833">
    <property type="entry name" value="Poly_Biosynth_Transport"/>
</dbReference>
<dbReference type="NCBIfam" id="NF007773">
    <property type="entry name" value="PRK10459.1"/>
    <property type="match status" value="1"/>
</dbReference>
<dbReference type="PANTHER" id="PTHR30250:SF10">
    <property type="entry name" value="LIPOPOLYSACCHARIDE BIOSYNTHESIS PROTEIN WZXC"/>
    <property type="match status" value="1"/>
</dbReference>
<dbReference type="PANTHER" id="PTHR30250">
    <property type="entry name" value="PST FAMILY PREDICTED COLANIC ACID TRANSPORTER"/>
    <property type="match status" value="1"/>
</dbReference>
<dbReference type="Pfam" id="PF13440">
    <property type="entry name" value="Polysacc_synt_3"/>
    <property type="match status" value="1"/>
</dbReference>
<accession>Q48457</accession>
<feature type="chain" id="PRO_0000166454" description="Uncharacterized membrane protein in cps region">
    <location>
        <begin position="1"/>
        <end position="485"/>
    </location>
</feature>
<feature type="transmembrane region" description="Helical" evidence="1">
    <location>
        <begin position="13"/>
        <end position="33"/>
    </location>
</feature>
<feature type="transmembrane region" description="Helical" evidence="1">
    <location>
        <begin position="38"/>
        <end position="58"/>
    </location>
</feature>
<feature type="transmembrane region" description="Helical" evidence="1">
    <location>
        <begin position="79"/>
        <end position="99"/>
    </location>
</feature>
<feature type="transmembrane region" description="Helical" evidence="1">
    <location>
        <begin position="111"/>
        <end position="131"/>
    </location>
</feature>
<feature type="transmembrane region" description="Helical" evidence="1">
    <location>
        <begin position="160"/>
        <end position="180"/>
    </location>
</feature>
<feature type="transmembrane region" description="Helical" evidence="1">
    <location>
        <begin position="211"/>
        <end position="231"/>
    </location>
</feature>
<feature type="transmembrane region" description="Helical" evidence="1">
    <location>
        <begin position="234"/>
        <end position="254"/>
    </location>
</feature>
<feature type="transmembrane region" description="Helical" evidence="1">
    <location>
        <begin position="297"/>
        <end position="317"/>
    </location>
</feature>
<feature type="transmembrane region" description="Helical" evidence="1">
    <location>
        <begin position="321"/>
        <end position="341"/>
    </location>
</feature>
<feature type="transmembrane region" description="Helical" evidence="1">
    <location>
        <begin position="365"/>
        <end position="385"/>
    </location>
</feature>
<feature type="transmembrane region" description="Helical" evidence="1">
    <location>
        <begin position="388"/>
        <end position="408"/>
    </location>
</feature>
<feature type="transmembrane region" description="Helical" evidence="1">
    <location>
        <begin position="420"/>
        <end position="440"/>
    </location>
</feature>
<feature type="transmembrane region" description="Helical" evidence="1">
    <location>
        <begin position="445"/>
        <end position="465"/>
    </location>
</feature>